<keyword id="KW-0175">Coiled coil</keyword>
<keyword id="KW-0963">Cytoplasm</keyword>
<keyword id="KW-0206">Cytoskeleton</keyword>
<keyword id="KW-0539">Nucleus</keyword>
<keyword id="KW-0597">Phosphoprotein</keyword>
<organism>
    <name type="scientific">Saccharomyces cerevisiae (strain FostersO)</name>
    <name type="common">Baker's yeast</name>
    <dbReference type="NCBI Taxonomy" id="764101"/>
    <lineage>
        <taxon>Eukaryota</taxon>
        <taxon>Fungi</taxon>
        <taxon>Dikarya</taxon>
        <taxon>Ascomycota</taxon>
        <taxon>Saccharomycotina</taxon>
        <taxon>Saccharomycetes</taxon>
        <taxon>Saccharomycetales</taxon>
        <taxon>Saccharomycetaceae</taxon>
        <taxon>Saccharomyces</taxon>
    </lineage>
</organism>
<sequence>MNGSPTPKRYSSKSSRLYDDYYNIPYQYSNPTPMNRDYNDVGSRINADKLVPEEYKRNTEFINKAVQQNKELNFKLREKQNEIFELKKIAETLRSKLEKYVDITKKLENQNLNLQIKISDLEKKLSDANSTFKEMRFPKVKDPMVDDDPVSENYDQINVPKHRAPDATGNPRTTNKVSNTSDQDSRLKAIERTLSVLTNYVMRSEDGNNDRMSPLPSPLNTISPINNRLNFQEPKRYNPTVKVNPSDDDIMMYESAELKRVEEEIEELKRKILVRKKHDLRKLSLNNQLQELQSMMDGDDNIKLDNVSKHNHATHRHSSQSSRDYSPSSDACLECSNDLYEKNRVKPENNMSETFATPTPNNR</sequence>
<protein>
    <recommendedName>
        <fullName>Spindle pole body component SPC42</fullName>
    </recommendedName>
</protein>
<proteinExistence type="inferred from homology"/>
<feature type="chain" id="PRO_0000409218" description="Spindle pole body component SPC42">
    <location>
        <begin position="1"/>
        <end position="363"/>
    </location>
</feature>
<feature type="region of interest" description="Disordered" evidence="4">
    <location>
        <begin position="160"/>
        <end position="184"/>
    </location>
</feature>
<feature type="region of interest" description="Disordered" evidence="4">
    <location>
        <begin position="310"/>
        <end position="363"/>
    </location>
</feature>
<feature type="coiled-coil region" evidence="3">
    <location>
        <begin position="62"/>
        <end position="136"/>
    </location>
</feature>
<feature type="coiled-coil region" evidence="3">
    <location>
        <begin position="248"/>
        <end position="297"/>
    </location>
</feature>
<feature type="compositionally biased region" description="Polar residues" evidence="4">
    <location>
        <begin position="170"/>
        <end position="182"/>
    </location>
</feature>
<feature type="compositionally biased region" description="Low complexity" evidence="4">
    <location>
        <begin position="319"/>
        <end position="329"/>
    </location>
</feature>
<feature type="compositionally biased region" description="Polar residues" evidence="4">
    <location>
        <begin position="349"/>
        <end position="363"/>
    </location>
</feature>
<feature type="modified residue" description="Phosphoserine" evidence="2">
    <location>
        <position position="213"/>
    </location>
</feature>
<feature type="modified residue" description="Phosphoserine" evidence="2">
    <location>
        <position position="217"/>
    </location>
</feature>
<feature type="modified residue" description="Phosphoserine" evidence="2">
    <location>
        <position position="284"/>
    </location>
</feature>
<feature type="modified residue" description="Phosphoserine" evidence="2">
    <location>
        <position position="329"/>
    </location>
</feature>
<dbReference type="EMBL" id="AEEZ01000061">
    <property type="protein sequence ID" value="EGA61435.1"/>
    <property type="molecule type" value="Genomic_DNA"/>
</dbReference>
<dbReference type="SMR" id="E7NK16"/>
<dbReference type="HOGENOM" id="CLU_056211_1_0_1"/>
<dbReference type="OMA" id="HNHATHR"/>
<dbReference type="OrthoDB" id="33113at4893"/>
<dbReference type="GO" id="GO:0005737">
    <property type="term" value="C:cytoplasm"/>
    <property type="evidence" value="ECO:0007669"/>
    <property type="project" value="UniProtKB-KW"/>
</dbReference>
<dbReference type="GO" id="GO:0005634">
    <property type="term" value="C:nucleus"/>
    <property type="evidence" value="ECO:0007669"/>
    <property type="project" value="UniProtKB-SubCell"/>
</dbReference>
<dbReference type="GO" id="GO:0005816">
    <property type="term" value="C:spindle pole body"/>
    <property type="evidence" value="ECO:0007669"/>
    <property type="project" value="UniProtKB-SubCell"/>
</dbReference>
<dbReference type="Gene3D" id="1.20.5.1180">
    <property type="entry name" value="Geminin coiled-coil domain"/>
    <property type="match status" value="1"/>
</dbReference>
<dbReference type="InterPro" id="IPR021611">
    <property type="entry name" value="Spc42"/>
</dbReference>
<dbReference type="Pfam" id="PF11544">
    <property type="entry name" value="Spc42p"/>
    <property type="match status" value="1"/>
</dbReference>
<name>SPC42_YEASO</name>
<evidence type="ECO:0000250" key="1"/>
<evidence type="ECO:0000250" key="2">
    <source>
        <dbReference type="UniProtKB" id="P36094"/>
    </source>
</evidence>
<evidence type="ECO:0000255" key="3"/>
<evidence type="ECO:0000256" key="4">
    <source>
        <dbReference type="SAM" id="MobiDB-lite"/>
    </source>
</evidence>
<evidence type="ECO:0000305" key="5"/>
<comment type="function">
    <text evidence="1">Forms a polymeric layer at the periphery of the spindle pole body (SPB) central plaque which has an essential function during SPB duplication and may facilitate attachment of the SPB to the nuclear membrane.</text>
</comment>
<comment type="subunit">
    <text evidence="1">Component of the SPC110 complex containing at least CMD1, SPC29, SPC42 and SCP110.</text>
</comment>
<comment type="subcellular location">
    <subcellularLocation>
        <location evidence="1">Nucleus</location>
    </subcellularLocation>
    <subcellularLocation>
        <location evidence="1">Cytoplasm</location>
        <location evidence="1">Cytoskeleton</location>
        <location evidence="1">Microtubule organizing center</location>
        <location evidence="1">Spindle pole body</location>
    </subcellularLocation>
</comment>
<comment type="similarity">
    <text evidence="5">Belongs to the SPC42 family.</text>
</comment>
<accession>E7NK16</accession>
<reference key="1">
    <citation type="journal article" date="2011" name="PLoS Genet.">
        <title>Whole-genome comparison reveals novel genetic elements that characterize the genome of industrial strains of Saccharomyces cerevisiae.</title>
        <authorList>
            <person name="Borneman A.R."/>
            <person name="Desany B.A."/>
            <person name="Riches D."/>
            <person name="Affourtit J.P."/>
            <person name="Forgan A.H."/>
            <person name="Pretorius I.S."/>
            <person name="Egholm M."/>
            <person name="Chambers P.J."/>
        </authorList>
    </citation>
    <scope>NUCLEOTIDE SEQUENCE [LARGE SCALE GENOMIC DNA]</scope>
    <source>
        <strain>FostersO</strain>
    </source>
</reference>
<gene>
    <name type="primary">SPC42</name>
    <name type="ORF">FOSTERSO_2864</name>
</gene>